<feature type="chain" id="PRO_0000297208" description="3-methyl-2-oxobutanoate hydroxymethyltransferase">
    <location>
        <begin position="1"/>
        <end position="269"/>
    </location>
</feature>
<feature type="active site" description="Proton acceptor" evidence="1">
    <location>
        <position position="179"/>
    </location>
</feature>
<feature type="binding site" evidence="1">
    <location>
        <begin position="43"/>
        <end position="44"/>
    </location>
    <ligand>
        <name>3-methyl-2-oxobutanoate</name>
        <dbReference type="ChEBI" id="CHEBI:11851"/>
    </ligand>
</feature>
<feature type="binding site" evidence="1">
    <location>
        <position position="43"/>
    </location>
    <ligand>
        <name>Mg(2+)</name>
        <dbReference type="ChEBI" id="CHEBI:18420"/>
    </ligand>
</feature>
<feature type="binding site" evidence="1">
    <location>
        <position position="82"/>
    </location>
    <ligand>
        <name>3-methyl-2-oxobutanoate</name>
        <dbReference type="ChEBI" id="CHEBI:11851"/>
    </ligand>
</feature>
<feature type="binding site" evidence="1">
    <location>
        <position position="82"/>
    </location>
    <ligand>
        <name>Mg(2+)</name>
        <dbReference type="ChEBI" id="CHEBI:18420"/>
    </ligand>
</feature>
<feature type="binding site" evidence="1">
    <location>
        <position position="110"/>
    </location>
    <ligand>
        <name>3-methyl-2-oxobutanoate</name>
        <dbReference type="ChEBI" id="CHEBI:11851"/>
    </ligand>
</feature>
<feature type="binding site" evidence="1">
    <location>
        <position position="112"/>
    </location>
    <ligand>
        <name>Mg(2+)</name>
        <dbReference type="ChEBI" id="CHEBI:18420"/>
    </ligand>
</feature>
<proteinExistence type="inferred from homology"/>
<sequence>MISLSDLRKFKTEGRKFSCLTCYDASMAKAMEFAEIDSILIGDSLGMVIQGHDSTLPVTVDDMAYHTAAVRRGNQHSFIMTDLPFMSYATLPDALNNAKKVMQAGAQMIKIEGGAWLSESIRVLTQNGIPVCVHLGLTPQSVHVFGGYKLQAKTREAADQLIADCQAVVDAGAAILLLECVPAQLGQEIAELFPQTPVIGIGAGKETDGQVLVAQDMLGLSFGKVARFVRNFMKEQAGETAIVDAFKAYHAAVQDQSFPAREHTFQVEL</sequence>
<organism>
    <name type="scientific">Acinetobacter baylyi (strain ATCC 33305 / BD413 / ADP1)</name>
    <dbReference type="NCBI Taxonomy" id="62977"/>
    <lineage>
        <taxon>Bacteria</taxon>
        <taxon>Pseudomonadati</taxon>
        <taxon>Pseudomonadota</taxon>
        <taxon>Gammaproteobacteria</taxon>
        <taxon>Moraxellales</taxon>
        <taxon>Moraxellaceae</taxon>
        <taxon>Acinetobacter</taxon>
    </lineage>
</organism>
<keyword id="KW-0963">Cytoplasm</keyword>
<keyword id="KW-0460">Magnesium</keyword>
<keyword id="KW-0479">Metal-binding</keyword>
<keyword id="KW-0566">Pantothenate biosynthesis</keyword>
<keyword id="KW-0808">Transferase</keyword>
<gene>
    <name evidence="1" type="primary">panB</name>
    <name type="ordered locus">ACIAD3061</name>
</gene>
<protein>
    <recommendedName>
        <fullName evidence="1">3-methyl-2-oxobutanoate hydroxymethyltransferase</fullName>
        <ecNumber evidence="1">2.1.2.11</ecNumber>
    </recommendedName>
    <alternativeName>
        <fullName evidence="1">Ketopantoate hydroxymethyltransferase</fullName>
        <shortName evidence="1">KPHMT</shortName>
    </alternativeName>
</protein>
<comment type="function">
    <text evidence="1">Catalyzes the reversible reaction in which hydroxymethyl group from 5,10-methylenetetrahydrofolate is transferred onto alpha-ketoisovalerate to form ketopantoate.</text>
</comment>
<comment type="catalytic activity">
    <reaction evidence="1">
        <text>3-methyl-2-oxobutanoate + (6R)-5,10-methylene-5,6,7,8-tetrahydrofolate + H2O = 2-dehydropantoate + (6S)-5,6,7,8-tetrahydrofolate</text>
        <dbReference type="Rhea" id="RHEA:11824"/>
        <dbReference type="ChEBI" id="CHEBI:11561"/>
        <dbReference type="ChEBI" id="CHEBI:11851"/>
        <dbReference type="ChEBI" id="CHEBI:15377"/>
        <dbReference type="ChEBI" id="CHEBI:15636"/>
        <dbReference type="ChEBI" id="CHEBI:57453"/>
        <dbReference type="EC" id="2.1.2.11"/>
    </reaction>
</comment>
<comment type="cofactor">
    <cofactor evidence="1">
        <name>Mg(2+)</name>
        <dbReference type="ChEBI" id="CHEBI:18420"/>
    </cofactor>
    <text evidence="1">Binds 1 Mg(2+) ion per subunit.</text>
</comment>
<comment type="pathway">
    <text evidence="1">Cofactor biosynthesis; (R)-pantothenate biosynthesis; (R)-pantoate from 3-methyl-2-oxobutanoate: step 1/2.</text>
</comment>
<comment type="subunit">
    <text evidence="1">Homodecamer; pentamer of dimers.</text>
</comment>
<comment type="subcellular location">
    <subcellularLocation>
        <location evidence="1">Cytoplasm</location>
    </subcellularLocation>
</comment>
<comment type="similarity">
    <text evidence="1">Belongs to the PanB family.</text>
</comment>
<comment type="sequence caution" evidence="2">
    <conflict type="erroneous initiation">
        <sequence resource="EMBL-CDS" id="CAG69761"/>
    </conflict>
</comment>
<accession>Q6F854</accession>
<dbReference type="EC" id="2.1.2.11" evidence="1"/>
<dbReference type="EMBL" id="CR543861">
    <property type="protein sequence ID" value="CAG69761.1"/>
    <property type="status" value="ALT_INIT"/>
    <property type="molecule type" value="Genomic_DNA"/>
</dbReference>
<dbReference type="RefSeq" id="WP_004924492.1">
    <property type="nucleotide sequence ID" value="NC_005966.1"/>
</dbReference>
<dbReference type="SMR" id="Q6F854"/>
<dbReference type="STRING" id="202950.GCA_001485005_02721"/>
<dbReference type="GeneID" id="45235283"/>
<dbReference type="KEGG" id="aci:ACIAD3061"/>
<dbReference type="eggNOG" id="COG0413">
    <property type="taxonomic scope" value="Bacteria"/>
</dbReference>
<dbReference type="HOGENOM" id="CLU_036645_1_0_6"/>
<dbReference type="OrthoDB" id="9781789at2"/>
<dbReference type="BioCyc" id="ASP62977:ACIAD_RS13840-MONOMER"/>
<dbReference type="UniPathway" id="UPA00028">
    <property type="reaction ID" value="UER00003"/>
</dbReference>
<dbReference type="Proteomes" id="UP000000430">
    <property type="component" value="Chromosome"/>
</dbReference>
<dbReference type="GO" id="GO:0005737">
    <property type="term" value="C:cytoplasm"/>
    <property type="evidence" value="ECO:0007669"/>
    <property type="project" value="UniProtKB-SubCell"/>
</dbReference>
<dbReference type="GO" id="GO:0003864">
    <property type="term" value="F:3-methyl-2-oxobutanoate hydroxymethyltransferase activity"/>
    <property type="evidence" value="ECO:0007669"/>
    <property type="project" value="UniProtKB-UniRule"/>
</dbReference>
<dbReference type="GO" id="GO:0000287">
    <property type="term" value="F:magnesium ion binding"/>
    <property type="evidence" value="ECO:0007669"/>
    <property type="project" value="TreeGrafter"/>
</dbReference>
<dbReference type="GO" id="GO:0015940">
    <property type="term" value="P:pantothenate biosynthetic process"/>
    <property type="evidence" value="ECO:0007669"/>
    <property type="project" value="UniProtKB-UniRule"/>
</dbReference>
<dbReference type="CDD" id="cd06557">
    <property type="entry name" value="KPHMT-like"/>
    <property type="match status" value="1"/>
</dbReference>
<dbReference type="FunFam" id="3.20.20.60:FF:000003">
    <property type="entry name" value="3-methyl-2-oxobutanoate hydroxymethyltransferase"/>
    <property type="match status" value="1"/>
</dbReference>
<dbReference type="Gene3D" id="3.20.20.60">
    <property type="entry name" value="Phosphoenolpyruvate-binding domains"/>
    <property type="match status" value="1"/>
</dbReference>
<dbReference type="HAMAP" id="MF_00156">
    <property type="entry name" value="PanB"/>
    <property type="match status" value="1"/>
</dbReference>
<dbReference type="InterPro" id="IPR003700">
    <property type="entry name" value="Pantoate_hydroxy_MeTrfase"/>
</dbReference>
<dbReference type="InterPro" id="IPR015813">
    <property type="entry name" value="Pyrv/PenolPyrv_kinase-like_dom"/>
</dbReference>
<dbReference type="InterPro" id="IPR040442">
    <property type="entry name" value="Pyrv_kinase-like_dom_sf"/>
</dbReference>
<dbReference type="NCBIfam" id="TIGR00222">
    <property type="entry name" value="panB"/>
    <property type="match status" value="1"/>
</dbReference>
<dbReference type="NCBIfam" id="NF001452">
    <property type="entry name" value="PRK00311.1"/>
    <property type="match status" value="1"/>
</dbReference>
<dbReference type="PANTHER" id="PTHR20881">
    <property type="entry name" value="3-METHYL-2-OXOBUTANOATE HYDROXYMETHYLTRANSFERASE"/>
    <property type="match status" value="1"/>
</dbReference>
<dbReference type="PANTHER" id="PTHR20881:SF0">
    <property type="entry name" value="3-METHYL-2-OXOBUTANOATE HYDROXYMETHYLTRANSFERASE"/>
    <property type="match status" value="1"/>
</dbReference>
<dbReference type="Pfam" id="PF02548">
    <property type="entry name" value="Pantoate_transf"/>
    <property type="match status" value="1"/>
</dbReference>
<dbReference type="PIRSF" id="PIRSF000388">
    <property type="entry name" value="Pantoate_hydroxy_MeTrfase"/>
    <property type="match status" value="1"/>
</dbReference>
<dbReference type="SUPFAM" id="SSF51621">
    <property type="entry name" value="Phosphoenolpyruvate/pyruvate domain"/>
    <property type="match status" value="1"/>
</dbReference>
<name>PANB_ACIAD</name>
<reference key="1">
    <citation type="journal article" date="2004" name="Nucleic Acids Res.">
        <title>Unique features revealed by the genome sequence of Acinetobacter sp. ADP1, a versatile and naturally transformation competent bacterium.</title>
        <authorList>
            <person name="Barbe V."/>
            <person name="Vallenet D."/>
            <person name="Fonknechten N."/>
            <person name="Kreimeyer A."/>
            <person name="Oztas S."/>
            <person name="Labarre L."/>
            <person name="Cruveiller S."/>
            <person name="Robert C."/>
            <person name="Duprat S."/>
            <person name="Wincker P."/>
            <person name="Ornston L.N."/>
            <person name="Weissenbach J."/>
            <person name="Marliere P."/>
            <person name="Cohen G.N."/>
            <person name="Medigue C."/>
        </authorList>
    </citation>
    <scope>NUCLEOTIDE SEQUENCE [LARGE SCALE GENOMIC DNA]</scope>
    <source>
        <strain>ATCC 33305 / BD413 / ADP1</strain>
    </source>
</reference>
<evidence type="ECO:0000255" key="1">
    <source>
        <dbReference type="HAMAP-Rule" id="MF_00156"/>
    </source>
</evidence>
<evidence type="ECO:0000305" key="2"/>